<organism>
    <name type="scientific">Rickettsia canadensis (strain McKiel)</name>
    <dbReference type="NCBI Taxonomy" id="293613"/>
    <lineage>
        <taxon>Bacteria</taxon>
        <taxon>Pseudomonadati</taxon>
        <taxon>Pseudomonadota</taxon>
        <taxon>Alphaproteobacteria</taxon>
        <taxon>Rickettsiales</taxon>
        <taxon>Rickettsiaceae</taxon>
        <taxon>Rickettsieae</taxon>
        <taxon>Rickettsia</taxon>
        <taxon>belli group</taxon>
    </lineage>
</organism>
<protein>
    <recommendedName>
        <fullName evidence="1">Protein GrpE</fullName>
    </recommendedName>
    <alternativeName>
        <fullName evidence="1">HSP-70 cofactor</fullName>
    </alternativeName>
</protein>
<accession>A8EY32</accession>
<evidence type="ECO:0000255" key="1">
    <source>
        <dbReference type="HAMAP-Rule" id="MF_01151"/>
    </source>
</evidence>
<evidence type="ECO:0000256" key="2">
    <source>
        <dbReference type="SAM" id="MobiDB-lite"/>
    </source>
</evidence>
<reference key="1">
    <citation type="submission" date="2007-09" db="EMBL/GenBank/DDBJ databases">
        <title>Complete genome sequence of Rickettsia canadensis.</title>
        <authorList>
            <person name="Madan A."/>
            <person name="Fahey J."/>
            <person name="Helton E."/>
            <person name="Ketteman M."/>
            <person name="Madan A."/>
            <person name="Rodrigues S."/>
            <person name="Sanchez A."/>
            <person name="Whiting M."/>
            <person name="Dasch G."/>
            <person name="Eremeeva M."/>
        </authorList>
    </citation>
    <scope>NUCLEOTIDE SEQUENCE [LARGE SCALE GENOMIC DNA]</scope>
    <source>
        <strain>McKiel</strain>
    </source>
</reference>
<comment type="function">
    <text evidence="1">Participates actively in the response to hyperosmotic and heat shock by preventing the aggregation of stress-denatured proteins, in association with DnaK and GrpE. It is the nucleotide exchange factor for DnaK and may function as a thermosensor. Unfolded proteins bind initially to DnaJ; upon interaction with the DnaJ-bound protein, DnaK hydrolyzes its bound ATP, resulting in the formation of a stable complex. GrpE releases ADP from DnaK; ATP binding to DnaK triggers the release of the substrate protein, thus completing the reaction cycle. Several rounds of ATP-dependent interactions between DnaJ, DnaK and GrpE are required for fully efficient folding.</text>
</comment>
<comment type="subunit">
    <text evidence="1">Homodimer.</text>
</comment>
<comment type="subcellular location">
    <subcellularLocation>
        <location evidence="1">Cytoplasm</location>
    </subcellularLocation>
</comment>
<comment type="similarity">
    <text evidence="1">Belongs to the GrpE family.</text>
</comment>
<name>GRPE_RICCK</name>
<dbReference type="EMBL" id="CP000409">
    <property type="protein sequence ID" value="ABV73265.1"/>
    <property type="molecule type" value="Genomic_DNA"/>
</dbReference>
<dbReference type="RefSeq" id="WP_012148464.1">
    <property type="nucleotide sequence ID" value="NC_009879.1"/>
</dbReference>
<dbReference type="SMR" id="A8EY32"/>
<dbReference type="STRING" id="293613.A1E_01600"/>
<dbReference type="KEGG" id="rcm:A1E_01600"/>
<dbReference type="eggNOG" id="COG0576">
    <property type="taxonomic scope" value="Bacteria"/>
</dbReference>
<dbReference type="HOGENOM" id="CLU_057217_6_2_5"/>
<dbReference type="Proteomes" id="UP000007056">
    <property type="component" value="Chromosome"/>
</dbReference>
<dbReference type="GO" id="GO:0005737">
    <property type="term" value="C:cytoplasm"/>
    <property type="evidence" value="ECO:0007669"/>
    <property type="project" value="UniProtKB-SubCell"/>
</dbReference>
<dbReference type="GO" id="GO:0000774">
    <property type="term" value="F:adenyl-nucleotide exchange factor activity"/>
    <property type="evidence" value="ECO:0007669"/>
    <property type="project" value="InterPro"/>
</dbReference>
<dbReference type="GO" id="GO:0042803">
    <property type="term" value="F:protein homodimerization activity"/>
    <property type="evidence" value="ECO:0007669"/>
    <property type="project" value="InterPro"/>
</dbReference>
<dbReference type="GO" id="GO:0051087">
    <property type="term" value="F:protein-folding chaperone binding"/>
    <property type="evidence" value="ECO:0007669"/>
    <property type="project" value="InterPro"/>
</dbReference>
<dbReference type="GO" id="GO:0051082">
    <property type="term" value="F:unfolded protein binding"/>
    <property type="evidence" value="ECO:0007669"/>
    <property type="project" value="TreeGrafter"/>
</dbReference>
<dbReference type="GO" id="GO:0006457">
    <property type="term" value="P:protein folding"/>
    <property type="evidence" value="ECO:0007669"/>
    <property type="project" value="InterPro"/>
</dbReference>
<dbReference type="GO" id="GO:0030150">
    <property type="term" value="P:protein import into mitochondrial matrix"/>
    <property type="evidence" value="ECO:0007669"/>
    <property type="project" value="TreeGrafter"/>
</dbReference>
<dbReference type="CDD" id="cd00446">
    <property type="entry name" value="GrpE"/>
    <property type="match status" value="1"/>
</dbReference>
<dbReference type="FunFam" id="2.30.22.10:FF:000001">
    <property type="entry name" value="Protein GrpE"/>
    <property type="match status" value="1"/>
</dbReference>
<dbReference type="Gene3D" id="3.90.20.20">
    <property type="match status" value="1"/>
</dbReference>
<dbReference type="Gene3D" id="2.30.22.10">
    <property type="entry name" value="Head domain of nucleotide exchange factor GrpE"/>
    <property type="match status" value="1"/>
</dbReference>
<dbReference type="HAMAP" id="MF_01151">
    <property type="entry name" value="GrpE"/>
    <property type="match status" value="1"/>
</dbReference>
<dbReference type="InterPro" id="IPR000740">
    <property type="entry name" value="GrpE"/>
</dbReference>
<dbReference type="InterPro" id="IPR013805">
    <property type="entry name" value="GrpE_coiled_coil"/>
</dbReference>
<dbReference type="InterPro" id="IPR009012">
    <property type="entry name" value="GrpE_head"/>
</dbReference>
<dbReference type="NCBIfam" id="NF010758">
    <property type="entry name" value="PRK14161.1"/>
    <property type="match status" value="1"/>
</dbReference>
<dbReference type="PANTHER" id="PTHR21237">
    <property type="entry name" value="GRPE PROTEIN"/>
    <property type="match status" value="1"/>
</dbReference>
<dbReference type="PANTHER" id="PTHR21237:SF23">
    <property type="entry name" value="GRPE PROTEIN HOMOLOG, MITOCHONDRIAL"/>
    <property type="match status" value="1"/>
</dbReference>
<dbReference type="Pfam" id="PF01025">
    <property type="entry name" value="GrpE"/>
    <property type="match status" value="1"/>
</dbReference>
<dbReference type="PRINTS" id="PR00773">
    <property type="entry name" value="GRPEPROTEIN"/>
</dbReference>
<dbReference type="SUPFAM" id="SSF58014">
    <property type="entry name" value="Coiled-coil domain of nucleotide exchange factor GrpE"/>
    <property type="match status" value="1"/>
</dbReference>
<dbReference type="SUPFAM" id="SSF51064">
    <property type="entry name" value="Head domain of nucleotide exchange factor GrpE"/>
    <property type="match status" value="1"/>
</dbReference>
<dbReference type="PROSITE" id="PS01071">
    <property type="entry name" value="GRPE"/>
    <property type="match status" value="1"/>
</dbReference>
<keyword id="KW-0143">Chaperone</keyword>
<keyword id="KW-0963">Cytoplasm</keyword>
<keyword id="KW-0346">Stress response</keyword>
<feature type="chain" id="PRO_1000137606" description="Protein GrpE">
    <location>
        <begin position="1"/>
        <end position="179"/>
    </location>
</feature>
<feature type="region of interest" description="Disordered" evidence="2">
    <location>
        <begin position="1"/>
        <end position="22"/>
    </location>
</feature>
<feature type="compositionally biased region" description="Basic and acidic residues" evidence="2">
    <location>
        <begin position="11"/>
        <end position="22"/>
    </location>
</feature>
<sequence length="179" mass="20551">MTDNNIENNEEEIRKAPSANDREELTELKAQIEELKDKLIRTTAEIDNTRKRLEKARDEAKDYAIATFAKELLNVSDNLARALAHTPAKLDVEVINIIEGVQMTKDELDKIFHKHHIEEIKPEIGSMFDYNLHNAISQIDNTKYAPNSVITVMQSGYKIKDRLLRPATVQVTKKPKQEE</sequence>
<proteinExistence type="inferred from homology"/>
<gene>
    <name evidence="1" type="primary">grpE</name>
    <name type="ordered locus">A1E_01600</name>
</gene>